<proteinExistence type="inferred from homology"/>
<organism>
    <name type="scientific">Eremothecium gossypii (strain ATCC 10895 / CBS 109.51 / FGSC 9923 / NRRL Y-1056)</name>
    <name type="common">Yeast</name>
    <name type="synonym">Ashbya gossypii</name>
    <dbReference type="NCBI Taxonomy" id="284811"/>
    <lineage>
        <taxon>Eukaryota</taxon>
        <taxon>Fungi</taxon>
        <taxon>Dikarya</taxon>
        <taxon>Ascomycota</taxon>
        <taxon>Saccharomycotina</taxon>
        <taxon>Saccharomycetes</taxon>
        <taxon>Saccharomycetales</taxon>
        <taxon>Saccharomycetaceae</taxon>
        <taxon>Eremothecium</taxon>
    </lineage>
</organism>
<protein>
    <recommendedName>
        <fullName>V-type proton ATPase subunit e</fullName>
        <shortName>V-ATPase subunit e</shortName>
    </recommendedName>
    <alternativeName>
        <fullName>Vacuolar proton pump subunit e</fullName>
    </alternativeName>
</protein>
<name>VA0E_EREGS</name>
<keyword id="KW-0375">Hydrogen ion transport</keyword>
<keyword id="KW-0406">Ion transport</keyword>
<keyword id="KW-0472">Membrane</keyword>
<keyword id="KW-1185">Reference proteome</keyword>
<keyword id="KW-0812">Transmembrane</keyword>
<keyword id="KW-1133">Transmembrane helix</keyword>
<keyword id="KW-0813">Transport</keyword>
<keyword id="KW-0926">Vacuole</keyword>
<dbReference type="EMBL" id="AE016814">
    <property type="protein sequence ID" value="AAS50361.1"/>
    <property type="molecule type" value="Genomic_DNA"/>
</dbReference>
<dbReference type="RefSeq" id="NP_982537.1">
    <property type="nucleotide sequence ID" value="NM_207890.1"/>
</dbReference>
<dbReference type="SMR" id="Q75EU0"/>
<dbReference type="FunCoup" id="Q75EU0">
    <property type="interactions" value="106"/>
</dbReference>
<dbReference type="STRING" id="284811.Q75EU0"/>
<dbReference type="EnsemblFungi" id="AAS50361">
    <property type="protein sequence ID" value="AAS50361"/>
    <property type="gene ID" value="AGOS_AAL005W"/>
</dbReference>
<dbReference type="GeneID" id="4618738"/>
<dbReference type="KEGG" id="ago:AGOS_AAL005W"/>
<dbReference type="eggNOG" id="ENOG502S76V">
    <property type="taxonomic scope" value="Eukaryota"/>
</dbReference>
<dbReference type="HOGENOM" id="CLU_170555_1_0_1"/>
<dbReference type="InParanoid" id="Q75EU0"/>
<dbReference type="OMA" id="WAITYLC"/>
<dbReference type="OrthoDB" id="1508846at2759"/>
<dbReference type="Proteomes" id="UP000000591">
    <property type="component" value="Chromosome I"/>
</dbReference>
<dbReference type="GO" id="GO:0000220">
    <property type="term" value="C:vacuolar proton-transporting V-type ATPase, V0 domain"/>
    <property type="evidence" value="ECO:0000318"/>
    <property type="project" value="GO_Central"/>
</dbReference>
<dbReference type="GO" id="GO:0046961">
    <property type="term" value="F:proton-transporting ATPase activity, rotational mechanism"/>
    <property type="evidence" value="ECO:0007669"/>
    <property type="project" value="InterPro"/>
</dbReference>
<dbReference type="GO" id="GO:0055085">
    <property type="term" value="P:transmembrane transport"/>
    <property type="evidence" value="ECO:0000318"/>
    <property type="project" value="GO_Central"/>
</dbReference>
<dbReference type="GO" id="GO:0007035">
    <property type="term" value="P:vacuolar acidification"/>
    <property type="evidence" value="ECO:0000318"/>
    <property type="project" value="GO_Central"/>
</dbReference>
<dbReference type="InterPro" id="IPR008389">
    <property type="entry name" value="ATPase_V0-cplx_e1/e2_su"/>
</dbReference>
<dbReference type="PANTHER" id="PTHR12263:SF0">
    <property type="entry name" value="V-TYPE PROTON ATPASE SUBUNIT"/>
    <property type="match status" value="1"/>
</dbReference>
<dbReference type="PANTHER" id="PTHR12263">
    <property type="entry name" value="VACUOLAR ATP SYNTHASE SUBUNIT H"/>
    <property type="match status" value="1"/>
</dbReference>
<dbReference type="Pfam" id="PF05493">
    <property type="entry name" value="ATP_synt_H"/>
    <property type="match status" value="1"/>
</dbReference>
<accession>Q75EU0</accession>
<gene>
    <name type="primary">VMA9</name>
    <name type="ordered locus">AAL005W</name>
</gene>
<sequence length="72" mass="8311">MSFYTVVATFLSVVLASAVFWVLAPKENQTVWRSTIILSMSMMFLMWAVTYLSQLHPLVVPRRSDLRPEFAE</sequence>
<feature type="chain" id="PRO_0000071734" description="V-type proton ATPase subunit e">
    <location>
        <begin position="1"/>
        <end position="72"/>
    </location>
</feature>
<feature type="topological domain" description="Lumenal" evidence="3">
    <location>
        <begin position="1"/>
        <end position="2"/>
    </location>
</feature>
<feature type="transmembrane region" description="Helical" evidence="2">
    <location>
        <begin position="3"/>
        <end position="23"/>
    </location>
</feature>
<feature type="topological domain" description="Cytoplasmic" evidence="3">
    <location>
        <begin position="24"/>
        <end position="34"/>
    </location>
</feature>
<feature type="transmembrane region" description="Helical" evidence="2">
    <location>
        <begin position="35"/>
        <end position="55"/>
    </location>
</feature>
<feature type="topological domain" description="Lumenal" evidence="3">
    <location>
        <begin position="56"/>
        <end position="72"/>
    </location>
</feature>
<evidence type="ECO:0000250" key="1">
    <source>
        <dbReference type="UniProtKB" id="Q3E7B6"/>
    </source>
</evidence>
<evidence type="ECO:0000255" key="2"/>
<evidence type="ECO:0000305" key="3"/>
<comment type="function">
    <text evidence="1">Subunit of the V0 complex of vacuolar(H+)-ATPase (V-ATPase), a multisubunit enzyme composed of a peripheral complex (V1) that hydrolyzes ATP and a membrane integral complex (V0) that translocates protons (By similarity). V-ATPase is responsible for acidifying and maintaining the pH of intracellular compartments (By similarity).</text>
</comment>
<comment type="subunit">
    <text evidence="1">V-ATPase is a heteromultimeric enzyme composed of a peripheral catalytic V1 complex (components A to H) attached to an integral membrane V0 proton pore complex (components: a, c, c', c'', d, e, f and VOA1).</text>
</comment>
<comment type="subcellular location">
    <subcellularLocation>
        <location evidence="1">Vacuole membrane</location>
        <topology evidence="2">Multi-pass membrane protein</topology>
    </subcellularLocation>
</comment>
<comment type="similarity">
    <text evidence="3">Belongs to the V-ATPase e1/e2 subunit family.</text>
</comment>
<reference key="1">
    <citation type="journal article" date="2004" name="Science">
        <title>The Ashbya gossypii genome as a tool for mapping the ancient Saccharomyces cerevisiae genome.</title>
        <authorList>
            <person name="Dietrich F.S."/>
            <person name="Voegeli S."/>
            <person name="Brachat S."/>
            <person name="Lerch A."/>
            <person name="Gates K."/>
            <person name="Steiner S."/>
            <person name="Mohr C."/>
            <person name="Poehlmann R."/>
            <person name="Luedi P."/>
            <person name="Choi S."/>
            <person name="Wing R.A."/>
            <person name="Flavier A."/>
            <person name="Gaffney T.D."/>
            <person name="Philippsen P."/>
        </authorList>
    </citation>
    <scope>NUCLEOTIDE SEQUENCE [LARGE SCALE GENOMIC DNA]</scope>
    <source>
        <strain>ATCC 10895 / CBS 109.51 / FGSC 9923 / NRRL Y-1056</strain>
    </source>
</reference>
<reference key="2">
    <citation type="journal article" date="2013" name="G3 (Bethesda)">
        <title>Genomes of Ashbya fungi isolated from insects reveal four mating-type loci, numerous translocations, lack of transposons, and distinct gene duplications.</title>
        <authorList>
            <person name="Dietrich F.S."/>
            <person name="Voegeli S."/>
            <person name="Kuo S."/>
            <person name="Philippsen P."/>
        </authorList>
    </citation>
    <scope>GENOME REANNOTATION</scope>
    <source>
        <strain>ATCC 10895 / CBS 109.51 / FGSC 9923 / NRRL Y-1056</strain>
    </source>
</reference>